<accession>O19884</accession>
<comment type="function">
    <text evidence="1">This protein binds to 23S rRNA.</text>
</comment>
<comment type="subunit">
    <text evidence="1">Part of the 50S ribosomal subunit.</text>
</comment>
<comment type="subcellular location">
    <subcellularLocation>
        <location>Plastid</location>
        <location>Chloroplast</location>
    </subcellularLocation>
</comment>
<comment type="similarity">
    <text evidence="1">Belongs to the bacterial ribosomal protein bL21 family.</text>
</comment>
<sequence length="108" mass="12528">MTNYAIVKASGRQLWFEPGKYYNINYVHANPGDKIIFYKVLLLKNTNSLLIGKPFVEKVEVHATILQHLKDKKITVFKMQAKKGTKKKKGYKTVLTKIKINCIHNHKK</sequence>
<feature type="chain" id="PRO_0000181023" description="Large ribosomal subunit protein bL21c">
    <location>
        <begin position="1"/>
        <end position="108"/>
    </location>
</feature>
<gene>
    <name evidence="1" type="primary">rpl21</name>
</gene>
<protein>
    <recommendedName>
        <fullName evidence="1">Large ribosomal subunit protein bL21c</fullName>
    </recommendedName>
    <alternativeName>
        <fullName evidence="2">50S ribosomal protein L21, chloroplastic</fullName>
    </alternativeName>
</protein>
<reference key="1">
    <citation type="journal article" date="2000" name="J. Mol. Evol.">
        <title>The structure and gene repertoire of an ancient red algal plastid genome.</title>
        <authorList>
            <person name="Gloeckner G."/>
            <person name="Rosenthal A."/>
            <person name="Valentin K.-U."/>
        </authorList>
    </citation>
    <scope>NUCLEOTIDE SEQUENCE [LARGE SCALE GENOMIC DNA]</scope>
    <source>
        <strain>RK-1</strain>
    </source>
</reference>
<evidence type="ECO:0000255" key="1">
    <source>
        <dbReference type="HAMAP-Rule" id="MF_01363"/>
    </source>
</evidence>
<evidence type="ECO:0000305" key="2"/>
<name>RK21_CYACA</name>
<keyword id="KW-0150">Chloroplast</keyword>
<keyword id="KW-0934">Plastid</keyword>
<keyword id="KW-0687">Ribonucleoprotein</keyword>
<keyword id="KW-0689">Ribosomal protein</keyword>
<keyword id="KW-0694">RNA-binding</keyword>
<keyword id="KW-0699">rRNA-binding</keyword>
<organism>
    <name type="scientific">Cyanidium caldarium</name>
    <name type="common">Red alga</name>
    <dbReference type="NCBI Taxonomy" id="2771"/>
    <lineage>
        <taxon>Eukaryota</taxon>
        <taxon>Rhodophyta</taxon>
        <taxon>Bangiophyceae</taxon>
        <taxon>Cyanidiales</taxon>
        <taxon>Cyanidiaceae</taxon>
        <taxon>Cyanidium</taxon>
    </lineage>
</organism>
<dbReference type="EMBL" id="AF022186">
    <property type="protein sequence ID" value="AAB82705.1"/>
    <property type="molecule type" value="Genomic_DNA"/>
</dbReference>
<dbReference type="PIR" id="T11952">
    <property type="entry name" value="T11952"/>
</dbReference>
<dbReference type="RefSeq" id="NP_045056.1">
    <property type="nucleotide sequence ID" value="NC_001840.1"/>
</dbReference>
<dbReference type="SMR" id="O19884"/>
<dbReference type="GeneID" id="800151"/>
<dbReference type="GO" id="GO:0009507">
    <property type="term" value="C:chloroplast"/>
    <property type="evidence" value="ECO:0007669"/>
    <property type="project" value="UniProtKB-SubCell"/>
</dbReference>
<dbReference type="GO" id="GO:0005762">
    <property type="term" value="C:mitochondrial large ribosomal subunit"/>
    <property type="evidence" value="ECO:0007669"/>
    <property type="project" value="TreeGrafter"/>
</dbReference>
<dbReference type="GO" id="GO:0019843">
    <property type="term" value="F:rRNA binding"/>
    <property type="evidence" value="ECO:0007669"/>
    <property type="project" value="UniProtKB-UniRule"/>
</dbReference>
<dbReference type="GO" id="GO:0003735">
    <property type="term" value="F:structural constituent of ribosome"/>
    <property type="evidence" value="ECO:0007669"/>
    <property type="project" value="InterPro"/>
</dbReference>
<dbReference type="GO" id="GO:0006412">
    <property type="term" value="P:translation"/>
    <property type="evidence" value="ECO:0007669"/>
    <property type="project" value="UniProtKB-UniRule"/>
</dbReference>
<dbReference type="HAMAP" id="MF_01363">
    <property type="entry name" value="Ribosomal_bL21"/>
    <property type="match status" value="1"/>
</dbReference>
<dbReference type="InterPro" id="IPR028909">
    <property type="entry name" value="bL21-like"/>
</dbReference>
<dbReference type="InterPro" id="IPR036164">
    <property type="entry name" value="bL21-like_sf"/>
</dbReference>
<dbReference type="InterPro" id="IPR001787">
    <property type="entry name" value="Ribosomal_bL21"/>
</dbReference>
<dbReference type="InterPro" id="IPR018258">
    <property type="entry name" value="Ribosomal_bL21_CS"/>
</dbReference>
<dbReference type="NCBIfam" id="TIGR00061">
    <property type="entry name" value="L21"/>
    <property type="match status" value="1"/>
</dbReference>
<dbReference type="PANTHER" id="PTHR21349">
    <property type="entry name" value="50S RIBOSOMAL PROTEIN L21"/>
    <property type="match status" value="1"/>
</dbReference>
<dbReference type="PANTHER" id="PTHR21349:SF7">
    <property type="entry name" value="LARGE RIBOSOMAL SUBUNIT PROTEIN BL21C"/>
    <property type="match status" value="1"/>
</dbReference>
<dbReference type="Pfam" id="PF00829">
    <property type="entry name" value="Ribosomal_L21p"/>
    <property type="match status" value="1"/>
</dbReference>
<dbReference type="SUPFAM" id="SSF141091">
    <property type="entry name" value="L21p-like"/>
    <property type="match status" value="1"/>
</dbReference>
<dbReference type="PROSITE" id="PS01169">
    <property type="entry name" value="RIBOSOMAL_L21"/>
    <property type="match status" value="1"/>
</dbReference>
<geneLocation type="chloroplast"/>
<proteinExistence type="inferred from homology"/>